<reference key="1">
    <citation type="journal article" date="1993" name="J. Gen. Microbiol.">
        <title>Evidence for Chlamydia pneumoniae of non-human origin.</title>
        <authorList>
            <person name="Storey C."/>
            <person name="Lusher M."/>
            <person name="Yates P."/>
            <person name="Richmond S."/>
        </authorList>
    </citation>
    <scope>NUCLEOTIDE SEQUENCE [GENOMIC DNA]</scope>
    <source>
        <strain>N16</strain>
    </source>
</reference>
<protein>
    <recommendedName>
        <fullName>Major outer membrane porin</fullName>
        <shortName>MOMP</shortName>
    </recommendedName>
</protein>
<proteinExistence type="evidence at transcript level"/>
<accession>Q07430</accession>
<gene>
    <name type="primary">ompA</name>
    <name type="synonym">omp1</name>
</gene>
<name>MOMPN_CHLPN</name>
<sequence length="389" mass="41628">MKKLLKSALLSAAFAGSVGSLQALPVGNPSDPSLLIDGTIWEGAAGDPCDPCATWCDAISLRAGFYGDYVFDRILKIDAPKTFSMGAKPTGSATANYTTAVDRPNPAYNKHLYDAEWFTNAGFIALNIWDRFDVFCTLGASNGYVKGNSAAFNLVGLFGVKGTSVNANELPNVSLSNGVIELYTDTTFAWSVGARGALWECGCATLGAEFQYAQSKPKVEELNVICNVSQFSLNKPKGYKGVAFPLPTDAGVVTAAGTKSATINYHEWQVGASLSYRLNSLVPYIGVQWSRATFDADNIRIAQPKLPTAILNLTAWNPSLLGSATAVSSSDQFSDFMQIVSCQINKFKSRKACGVTVGATLVDADKWSLTAEARLINERAAHISGQFRF</sequence>
<organism>
    <name type="scientific">Chlamydia pneumoniae</name>
    <name type="common">Chlamydophila pneumoniae</name>
    <dbReference type="NCBI Taxonomy" id="83558"/>
    <lineage>
        <taxon>Bacteria</taxon>
        <taxon>Pseudomonadati</taxon>
        <taxon>Chlamydiota</taxon>
        <taxon>Chlamydiia</taxon>
        <taxon>Chlamydiales</taxon>
        <taxon>Chlamydiaceae</taxon>
        <taxon>Chlamydia/Chlamydophila group</taxon>
        <taxon>Chlamydia</taxon>
    </lineage>
</organism>
<feature type="signal peptide" evidence="1">
    <location>
        <begin position="1"/>
        <end position="23"/>
    </location>
</feature>
<feature type="chain" id="PRO_0000020141" description="Major outer membrane porin">
    <location>
        <begin position="24"/>
        <end position="389"/>
    </location>
</feature>
<keyword id="KW-0998">Cell outer membrane</keyword>
<keyword id="KW-0133">Cell shape</keyword>
<keyword id="KW-1015">Disulfide bond</keyword>
<keyword id="KW-0406">Ion transport</keyword>
<keyword id="KW-0472">Membrane</keyword>
<keyword id="KW-0626">Porin</keyword>
<keyword id="KW-0732">Signal</keyword>
<keyword id="KW-0812">Transmembrane</keyword>
<keyword id="KW-1134">Transmembrane beta strand</keyword>
<keyword id="KW-0813">Transport</keyword>
<comment type="function">
    <text evidence="1">In elementary bodies (EBs, the infectious stage, which is able to survive outside the host cell) provides the structural integrity of the outer envelope through disulfide cross-links with the small cysteine-rich protein and the large cysteine-rich periplasmic protein. It has been described in publications as the Sarkosyl-insoluble COMC (Chlamydia outer membrane complex), and serves as the functional equivalent of peptidoglycan (By similarity).</text>
</comment>
<comment type="function">
    <text evidence="1">Permits diffusion of specific solutes through the outer membrane.</text>
</comment>
<comment type="subunit">
    <text>Part of a disulfide cross-linked outer membrane complex (COMC) composed of the major outer membrane porin (MOMP), the small cysteine-rich protein (OmcA) and the large cysteine-rich periplasmic protein (OmcB).</text>
</comment>
<comment type="subcellular location">
    <subcellularLocation>
        <location evidence="1">Cell outer membrane</location>
        <topology evidence="1">Multi-pass membrane protein</topology>
    </subcellularLocation>
</comment>
<comment type="developmental stage">
    <text>It is present but some of the disulfide bonds are reduced in reticulate bodies (RBs).</text>
</comment>
<comment type="similarity">
    <text evidence="2">Belongs to the chlamydial porin (CP) (TC 1.B.2) family.</text>
</comment>
<evidence type="ECO:0000250" key="1"/>
<evidence type="ECO:0000305" key="2"/>
<dbReference type="EMBL" id="L04982">
    <property type="protein sequence ID" value="AAA17397.1"/>
    <property type="molecule type" value="Unassigned_DNA"/>
</dbReference>
<dbReference type="PIR" id="I40739">
    <property type="entry name" value="I40739"/>
</dbReference>
<dbReference type="GO" id="GO:0009279">
    <property type="term" value="C:cell outer membrane"/>
    <property type="evidence" value="ECO:0007669"/>
    <property type="project" value="UniProtKB-SubCell"/>
</dbReference>
<dbReference type="GO" id="GO:0046930">
    <property type="term" value="C:pore complex"/>
    <property type="evidence" value="ECO:0007669"/>
    <property type="project" value="UniProtKB-KW"/>
</dbReference>
<dbReference type="GO" id="GO:0015288">
    <property type="term" value="F:porin activity"/>
    <property type="evidence" value="ECO:0007669"/>
    <property type="project" value="UniProtKB-KW"/>
</dbReference>
<dbReference type="GO" id="GO:0005198">
    <property type="term" value="F:structural molecule activity"/>
    <property type="evidence" value="ECO:0007669"/>
    <property type="project" value="InterPro"/>
</dbReference>
<dbReference type="GO" id="GO:0006811">
    <property type="term" value="P:monoatomic ion transport"/>
    <property type="evidence" value="ECO:0007669"/>
    <property type="project" value="UniProtKB-KW"/>
</dbReference>
<dbReference type="GO" id="GO:0008360">
    <property type="term" value="P:regulation of cell shape"/>
    <property type="evidence" value="ECO:0007669"/>
    <property type="project" value="UniProtKB-KW"/>
</dbReference>
<dbReference type="InterPro" id="IPR000604">
    <property type="entry name" value="Major_OMP_Chlamydia"/>
</dbReference>
<dbReference type="Pfam" id="PF01308">
    <property type="entry name" value="Chlam_OMP"/>
    <property type="match status" value="1"/>
</dbReference>
<dbReference type="PRINTS" id="PR01334">
    <property type="entry name" value="CHLAMIDIAOMP"/>
</dbReference>